<name>FAR12_MANKU</name>
<dbReference type="GO" id="GO:0005576">
    <property type="term" value="C:extracellular region"/>
    <property type="evidence" value="ECO:0007669"/>
    <property type="project" value="UniProtKB-SubCell"/>
</dbReference>
<dbReference type="GO" id="GO:0007218">
    <property type="term" value="P:neuropeptide signaling pathway"/>
    <property type="evidence" value="ECO:0007669"/>
    <property type="project" value="UniProtKB-KW"/>
</dbReference>
<keyword id="KW-0027">Amidation</keyword>
<keyword id="KW-0903">Direct protein sequencing</keyword>
<keyword id="KW-0527">Neuropeptide</keyword>
<keyword id="KW-0964">Secreted</keyword>
<feature type="peptide" id="PRO_0000420781" description="Extended FMRFamide-12" evidence="3">
    <location>
        <begin position="1"/>
        <end position="16"/>
    </location>
</feature>
<feature type="modified residue" description="Phenylalanine amide" evidence="3">
    <location>
        <position position="16"/>
    </location>
</feature>
<accession>B0M3D5</accession>
<protein>
    <recommendedName>
        <fullName evidence="4">Extended FMRFamide-12</fullName>
        <shortName evidence="4">FMRFa-12</shortName>
    </recommendedName>
</protein>
<evidence type="ECO:0000250" key="1">
    <source>
        <dbReference type="UniProtKB" id="P34405"/>
    </source>
</evidence>
<evidence type="ECO:0000255" key="2"/>
<evidence type="ECO:0000269" key="3">
    <source>
    </source>
</evidence>
<evidence type="ECO:0000303" key="4">
    <source>
    </source>
</evidence>
<evidence type="ECO:0000305" key="5"/>
<evidence type="ECO:0000305" key="6">
    <source>
    </source>
</evidence>
<reference evidence="5" key="1">
    <citation type="journal article" date="2012" name="Syst. Biol.">
        <title>Peptidomics-based phylogeny and biogeography of Mantophasmatodea (Hexapoda).</title>
        <authorList>
            <person name="Predel R."/>
            <person name="Neupert S."/>
            <person name="Huetteroth W."/>
            <person name="Kahnt J."/>
            <person name="Waidelich D."/>
            <person name="Roth S."/>
        </authorList>
    </citation>
    <scope>PROTEIN SEQUENCE</scope>
    <scope>AMIDATION AT PHE-16</scope>
    <source>
        <tissue evidence="3">Thoracic perisympathetic organs</tissue>
    </source>
</reference>
<organism>
    <name type="scientific">Mantophasma kudubergense</name>
    <name type="common">Gladiator</name>
    <name type="synonym">Heel-walker</name>
    <dbReference type="NCBI Taxonomy" id="1037657"/>
    <lineage>
        <taxon>Eukaryota</taxon>
        <taxon>Metazoa</taxon>
        <taxon>Ecdysozoa</taxon>
        <taxon>Arthropoda</taxon>
        <taxon>Hexapoda</taxon>
        <taxon>Insecta</taxon>
        <taxon>Pterygota</taxon>
        <taxon>Neoptera</taxon>
        <taxon>Polyneoptera</taxon>
        <taxon>Mantophasmatodea</taxon>
        <taxon>Mantophasmatidae</taxon>
        <taxon>Mantophasma</taxon>
    </lineage>
</organism>
<comment type="function">
    <text evidence="1">FMRFamides and FMRFamide-like peptides are neuropeptides.</text>
</comment>
<comment type="subcellular location">
    <subcellularLocation>
        <location evidence="6">Secreted</location>
    </subcellularLocation>
</comment>
<comment type="similarity">
    <text evidence="2">Belongs to the FARP (FMRF amide related peptide) family.</text>
</comment>
<sequence>SPGALEDEHNDNFLRF</sequence>
<proteinExistence type="evidence at protein level"/>